<proteinExistence type="evidence at protein level"/>
<name>BRE5_YEAST</name>
<protein>
    <recommendedName>
        <fullName>UBP3-associated protein BRE5</fullName>
    </recommendedName>
    <alternativeName>
        <fullName>Brefeldin-A sensitivity protein 5</fullName>
    </alternativeName>
</protein>
<feature type="chain" id="PRO_0000194803" description="UBP3-associated protein BRE5">
    <location>
        <begin position="1"/>
        <end position="515"/>
    </location>
</feature>
<feature type="domain" description="NTF2" evidence="1">
    <location>
        <begin position="8"/>
        <end position="140"/>
    </location>
</feature>
<feature type="domain" description="RRM" evidence="2">
    <location>
        <begin position="418"/>
        <end position="494"/>
    </location>
</feature>
<feature type="region of interest" description="Disordered" evidence="3">
    <location>
        <begin position="157"/>
        <end position="410"/>
    </location>
</feature>
<feature type="region of interest" description="Disordered" evidence="3">
    <location>
        <begin position="485"/>
        <end position="515"/>
    </location>
</feature>
<feature type="compositionally biased region" description="Low complexity" evidence="3">
    <location>
        <begin position="157"/>
        <end position="166"/>
    </location>
</feature>
<feature type="compositionally biased region" description="Basic and acidic residues" evidence="3">
    <location>
        <begin position="168"/>
        <end position="201"/>
    </location>
</feature>
<feature type="compositionally biased region" description="Polar residues" evidence="3">
    <location>
        <begin position="202"/>
        <end position="213"/>
    </location>
</feature>
<feature type="compositionally biased region" description="Basic and acidic residues" evidence="3">
    <location>
        <begin position="262"/>
        <end position="282"/>
    </location>
</feature>
<feature type="compositionally biased region" description="Basic and acidic residues" evidence="3">
    <location>
        <begin position="299"/>
        <end position="319"/>
    </location>
</feature>
<feature type="compositionally biased region" description="Polar residues" evidence="3">
    <location>
        <begin position="330"/>
        <end position="341"/>
    </location>
</feature>
<feature type="compositionally biased region" description="Basic and acidic residues" evidence="3">
    <location>
        <begin position="374"/>
        <end position="396"/>
    </location>
</feature>
<feature type="compositionally biased region" description="Polar residues" evidence="3">
    <location>
        <begin position="489"/>
        <end position="503"/>
    </location>
</feature>
<feature type="compositionally biased region" description="Basic residues" evidence="3">
    <location>
        <begin position="504"/>
        <end position="515"/>
    </location>
</feature>
<feature type="modified residue" description="Phosphoserine" evidence="9">
    <location>
        <position position="187"/>
    </location>
</feature>
<feature type="modified residue" description="Phosphoserine" evidence="11 12">
    <location>
        <position position="282"/>
    </location>
</feature>
<feature type="modified residue" description="Phosphothreonine" evidence="10">
    <location>
        <position position="336"/>
    </location>
</feature>
<feature type="modified residue" description="Phosphoserine" evidence="12">
    <location>
        <position position="340"/>
    </location>
</feature>
<feature type="modified residue" description="Phosphoserine" evidence="9">
    <location>
        <position position="398"/>
    </location>
</feature>
<feature type="mutagenesis site" description="No defect in the interaction with CDC48." evidence="7">
    <location>
        <begin position="2"/>
        <end position="146"/>
    </location>
</feature>
<feature type="mutagenesis site" description="Loss of interaction with CDC48." evidence="7">
    <location>
        <begin position="147"/>
        <end position="515"/>
    </location>
</feature>
<feature type="helix" evidence="13">
    <location>
        <begin position="5"/>
        <end position="22"/>
    </location>
</feature>
<feature type="helix" evidence="13">
    <location>
        <begin position="24"/>
        <end position="30"/>
    </location>
</feature>
<feature type="strand" evidence="13">
    <location>
        <begin position="31"/>
        <end position="40"/>
    </location>
</feature>
<feature type="strand" evidence="13">
    <location>
        <begin position="56"/>
        <end position="61"/>
    </location>
</feature>
<feature type="helix" evidence="13">
    <location>
        <begin position="62"/>
        <end position="71"/>
    </location>
</feature>
<feature type="helix" evidence="13">
    <location>
        <begin position="73"/>
        <end position="76"/>
    </location>
</feature>
<feature type="strand" evidence="13">
    <location>
        <begin position="79"/>
        <end position="92"/>
    </location>
</feature>
<feature type="helix" evidence="13">
    <location>
        <begin position="93"/>
        <end position="95"/>
    </location>
</feature>
<feature type="strand" evidence="13">
    <location>
        <begin position="97"/>
        <end position="108"/>
    </location>
</feature>
<feature type="strand" evidence="13">
    <location>
        <begin position="114"/>
        <end position="124"/>
    </location>
</feature>
<feature type="strand" evidence="13">
    <location>
        <begin position="131"/>
        <end position="141"/>
    </location>
</feature>
<evidence type="ECO:0000255" key="1">
    <source>
        <dbReference type="PROSITE-ProRule" id="PRU00137"/>
    </source>
</evidence>
<evidence type="ECO:0000255" key="2">
    <source>
        <dbReference type="PROSITE-ProRule" id="PRU00176"/>
    </source>
</evidence>
<evidence type="ECO:0000256" key="3">
    <source>
        <dbReference type="SAM" id="MobiDB-lite"/>
    </source>
</evidence>
<evidence type="ECO:0000269" key="4">
    <source>
    </source>
</evidence>
<evidence type="ECO:0000269" key="5">
    <source>
    </source>
</evidence>
<evidence type="ECO:0000269" key="6">
    <source>
    </source>
</evidence>
<evidence type="ECO:0000269" key="7">
    <source>
    </source>
</evidence>
<evidence type="ECO:0000305" key="8"/>
<evidence type="ECO:0007744" key="9">
    <source>
    </source>
</evidence>
<evidence type="ECO:0007744" key="10">
    <source>
    </source>
</evidence>
<evidence type="ECO:0007744" key="11">
    <source>
    </source>
</evidence>
<evidence type="ECO:0007744" key="12">
    <source>
    </source>
</evidence>
<evidence type="ECO:0007829" key="13">
    <source>
        <dbReference type="PDB" id="2QIY"/>
    </source>
</evidence>
<comment type="function">
    <text evidence="4">Has a role in de-ubiquitination. In conjunction with UBP3, cleaves ubiquitin, leading to the subsequent mono-ubiquitination of sec23.</text>
</comment>
<comment type="subunit">
    <text evidence="4 6 7">Heterotetramer with UBP3; contains two molecules of BRE5 and two molecules of UBP3 (PubMed:12778054, PubMed:17632125). Forms a complex composed of CDC48, DOA1, deubiquitinase UBP3 and probably BRE5 (PubMed:20508643). Within the complex, interacts (via C-terminus) with CDC48; the interaction is direct and UBP3-independent (PubMed:20508643).</text>
</comment>
<comment type="interaction">
    <interactant intactId="EBI-28528">
        <id>P53741</id>
    </interactant>
    <interactant intactId="EBI-28528">
        <id>P53741</id>
        <label>BRE5</label>
    </interactant>
    <organismsDiffer>false</organismsDiffer>
    <experiments>3</experiments>
</comment>
<comment type="interaction">
    <interactant intactId="EBI-28528">
        <id>P53741</id>
    </interactant>
    <interactant intactId="EBI-4308">
        <id>P25694</id>
        <label>CDC48</label>
    </interactant>
    <organismsDiffer>false</organismsDiffer>
    <experiments>4</experiments>
</comment>
<comment type="interaction">
    <interactant intactId="EBI-28528">
        <id>P53741</id>
    </interactant>
    <interactant intactId="EBI-8394">
        <id>P38074</id>
        <label>HMT1</label>
    </interactant>
    <organismsDiffer>false</organismsDiffer>
    <experiments>2</experiments>
</comment>
<comment type="interaction">
    <interactant intactId="EBI-28528">
        <id>P53741</id>
    </interactant>
    <interactant intactId="EBI-19834">
        <id>Q01477</id>
        <label>UBP3</label>
    </interactant>
    <organismsDiffer>false</organismsDiffer>
    <experiments>12</experiments>
</comment>
<comment type="miscellaneous">
    <text evidence="5">Present with 11700 molecules/cell in log phase SD medium.</text>
</comment>
<comment type="sequence caution" evidence="8">
    <conflict type="frameshift">
        <sequence resource="EMBL-CDS" id="AAA34833"/>
    </conflict>
</comment>
<comment type="sequence caution" evidence="8">
    <conflict type="frameshift">
        <sequence resource="EMBL-CDS" id="AAA34834"/>
    </conflict>
</comment>
<dbReference type="EMBL" id="Z71666">
    <property type="protein sequence ID" value="CAA96332.1"/>
    <property type="molecule type" value="Genomic_DNA"/>
</dbReference>
<dbReference type="EMBL" id="AY692784">
    <property type="protein sequence ID" value="AAT92803.1"/>
    <property type="molecule type" value="Genomic_DNA"/>
</dbReference>
<dbReference type="EMBL" id="M88607">
    <property type="protein sequence ID" value="AAA34833.1"/>
    <property type="status" value="ALT_FRAME"/>
    <property type="molecule type" value="Genomic_DNA"/>
</dbReference>
<dbReference type="EMBL" id="M88607">
    <property type="protein sequence ID" value="AAA34834.1"/>
    <property type="status" value="ALT_FRAME"/>
    <property type="molecule type" value="Genomic_DNA"/>
</dbReference>
<dbReference type="EMBL" id="BK006947">
    <property type="protein sequence ID" value="DAA10592.1"/>
    <property type="molecule type" value="Genomic_DNA"/>
</dbReference>
<dbReference type="PIR" id="S63382">
    <property type="entry name" value="S63382"/>
</dbReference>
<dbReference type="RefSeq" id="NP_014449.1">
    <property type="nucleotide sequence ID" value="NM_001183228.1"/>
</dbReference>
<dbReference type="PDB" id="1ZX2">
    <property type="method" value="X-ray"/>
    <property type="resolution" value="2.10 A"/>
    <property type="chains" value="A/B=1-146"/>
</dbReference>
<dbReference type="PDB" id="2QIY">
    <property type="method" value="X-ray"/>
    <property type="resolution" value="1.69 A"/>
    <property type="chains" value="A/B=1-146"/>
</dbReference>
<dbReference type="PDBsum" id="1ZX2"/>
<dbReference type="PDBsum" id="2QIY"/>
<dbReference type="SMR" id="P53741"/>
<dbReference type="BioGRID" id="35876">
    <property type="interactions" value="1290"/>
</dbReference>
<dbReference type="ComplexPortal" id="CPX-1412">
    <property type="entry name" value="UBP3-BRE5 ubiquitin hydrolase complex"/>
</dbReference>
<dbReference type="DIP" id="DIP-4254N"/>
<dbReference type="FunCoup" id="P53741">
    <property type="interactions" value="297"/>
</dbReference>
<dbReference type="IntAct" id="P53741">
    <property type="interactions" value="395"/>
</dbReference>
<dbReference type="MINT" id="P53741"/>
<dbReference type="STRING" id="4932.YNR051C"/>
<dbReference type="GlyGen" id="P53741">
    <property type="glycosylation" value="3 sites, 1 O-linked glycan (2 sites)"/>
</dbReference>
<dbReference type="iPTMnet" id="P53741"/>
<dbReference type="PaxDb" id="4932-YNR051C"/>
<dbReference type="PeptideAtlas" id="P53741"/>
<dbReference type="TopDownProteomics" id="P53741"/>
<dbReference type="EnsemblFungi" id="YNR051C_mRNA">
    <property type="protein sequence ID" value="YNR051C"/>
    <property type="gene ID" value="YNR051C"/>
</dbReference>
<dbReference type="GeneID" id="855787"/>
<dbReference type="KEGG" id="sce:YNR051C"/>
<dbReference type="AGR" id="SGD:S000005334"/>
<dbReference type="SGD" id="S000005334">
    <property type="gene designation" value="BRE5"/>
</dbReference>
<dbReference type="VEuPathDB" id="FungiDB:YNR051C"/>
<dbReference type="eggNOG" id="KOG0116">
    <property type="taxonomic scope" value="Eukaryota"/>
</dbReference>
<dbReference type="GeneTree" id="ENSGT00390000011365"/>
<dbReference type="HOGENOM" id="CLU_036630_0_0_1"/>
<dbReference type="InParanoid" id="P53741"/>
<dbReference type="OMA" id="KTYYQRM"/>
<dbReference type="OrthoDB" id="339151at2759"/>
<dbReference type="BioCyc" id="YEAST:G3O-33357-MONOMER"/>
<dbReference type="BioGRID-ORCS" id="855787">
    <property type="hits" value="8 hits in 10 CRISPR screens"/>
</dbReference>
<dbReference type="EvolutionaryTrace" id="P53741"/>
<dbReference type="PRO" id="PR:P53741"/>
<dbReference type="Proteomes" id="UP000002311">
    <property type="component" value="Chromosome XIV"/>
</dbReference>
<dbReference type="RNAct" id="P53741">
    <property type="molecule type" value="protein"/>
</dbReference>
<dbReference type="GO" id="GO:0005737">
    <property type="term" value="C:cytoplasm"/>
    <property type="evidence" value="ECO:0007005"/>
    <property type="project" value="SGD"/>
</dbReference>
<dbReference type="GO" id="GO:0010494">
    <property type="term" value="C:cytoplasmic stress granule"/>
    <property type="evidence" value="ECO:0000318"/>
    <property type="project" value="GO_Central"/>
</dbReference>
<dbReference type="GO" id="GO:0005829">
    <property type="term" value="C:cytosol"/>
    <property type="evidence" value="ECO:0000314"/>
    <property type="project" value="ComplexPortal"/>
</dbReference>
<dbReference type="GO" id="GO:0005739">
    <property type="term" value="C:mitochondrion"/>
    <property type="evidence" value="ECO:0000314"/>
    <property type="project" value="ComplexPortal"/>
</dbReference>
<dbReference type="GO" id="GO:0000932">
    <property type="term" value="C:P-body"/>
    <property type="evidence" value="ECO:0000314"/>
    <property type="project" value="SGD"/>
</dbReference>
<dbReference type="GO" id="GO:1990861">
    <property type="term" value="C:Ubp3-Bre5 deubiquitination complex"/>
    <property type="evidence" value="ECO:0000353"/>
    <property type="project" value="SGD"/>
</dbReference>
<dbReference type="GO" id="GO:0042802">
    <property type="term" value="F:identical protein binding"/>
    <property type="evidence" value="ECO:0000353"/>
    <property type="project" value="IntAct"/>
</dbReference>
<dbReference type="GO" id="GO:0003729">
    <property type="term" value="F:mRNA binding"/>
    <property type="evidence" value="ECO:0007005"/>
    <property type="project" value="SGD"/>
</dbReference>
<dbReference type="GO" id="GO:1901525">
    <property type="term" value="P:negative regulation of mitophagy"/>
    <property type="evidence" value="ECO:0000315"/>
    <property type="project" value="ComplexPortal"/>
</dbReference>
<dbReference type="GO" id="GO:0016579">
    <property type="term" value="P:protein deubiquitination"/>
    <property type="evidence" value="ECO:0000315"/>
    <property type="project" value="SGD"/>
</dbReference>
<dbReference type="GO" id="GO:0045053">
    <property type="term" value="P:protein retention in Golgi apparatus"/>
    <property type="evidence" value="ECO:0000315"/>
    <property type="project" value="SGD"/>
</dbReference>
<dbReference type="GO" id="GO:0060628">
    <property type="term" value="P:regulation of ER to Golgi vesicle-mediated transport"/>
    <property type="evidence" value="ECO:0000315"/>
    <property type="project" value="SGD"/>
</dbReference>
<dbReference type="GO" id="GO:2000156">
    <property type="term" value="P:regulation of retrograde vesicle-mediated transport, Golgi to ER"/>
    <property type="evidence" value="ECO:0000315"/>
    <property type="project" value="SGD"/>
</dbReference>
<dbReference type="GO" id="GO:0034517">
    <property type="term" value="P:ribophagy"/>
    <property type="evidence" value="ECO:0000315"/>
    <property type="project" value="SGD"/>
</dbReference>
<dbReference type="GO" id="GO:0034063">
    <property type="term" value="P:stress granule assembly"/>
    <property type="evidence" value="ECO:0000314"/>
    <property type="project" value="ComplexPortal"/>
</dbReference>
<dbReference type="CDD" id="cd00780">
    <property type="entry name" value="NTF2"/>
    <property type="match status" value="1"/>
</dbReference>
<dbReference type="FunFam" id="3.10.450.50:FF:000017">
    <property type="entry name" value="UBP3-associated protein BRE5"/>
    <property type="match status" value="1"/>
</dbReference>
<dbReference type="Gene3D" id="3.10.450.50">
    <property type="match status" value="1"/>
</dbReference>
<dbReference type="InterPro" id="IPR032710">
    <property type="entry name" value="NTF2-like_dom_sf"/>
</dbReference>
<dbReference type="InterPro" id="IPR002075">
    <property type="entry name" value="NTF2_dom"/>
</dbReference>
<dbReference type="InterPro" id="IPR018222">
    <property type="entry name" value="Nuclear_transport_factor_2_euk"/>
</dbReference>
<dbReference type="InterPro" id="IPR039539">
    <property type="entry name" value="Ras_GTPase_bind_prot"/>
</dbReference>
<dbReference type="InterPro" id="IPR000504">
    <property type="entry name" value="RRM_dom"/>
</dbReference>
<dbReference type="PANTHER" id="PTHR10693:SF20">
    <property type="entry name" value="AT27578P"/>
    <property type="match status" value="1"/>
</dbReference>
<dbReference type="PANTHER" id="PTHR10693">
    <property type="entry name" value="RAS GTPASE-ACTIVATING PROTEIN-BINDING PROTEIN"/>
    <property type="match status" value="1"/>
</dbReference>
<dbReference type="Pfam" id="PF02136">
    <property type="entry name" value="NTF2"/>
    <property type="match status" value="1"/>
</dbReference>
<dbReference type="SUPFAM" id="SSF54427">
    <property type="entry name" value="NTF2-like"/>
    <property type="match status" value="1"/>
</dbReference>
<dbReference type="PROSITE" id="PS50177">
    <property type="entry name" value="NTF2_DOMAIN"/>
    <property type="match status" value="1"/>
</dbReference>
<dbReference type="PROSITE" id="PS50102">
    <property type="entry name" value="RRM"/>
    <property type="match status" value="1"/>
</dbReference>
<organism>
    <name type="scientific">Saccharomyces cerevisiae (strain ATCC 204508 / S288c)</name>
    <name type="common">Baker's yeast</name>
    <dbReference type="NCBI Taxonomy" id="559292"/>
    <lineage>
        <taxon>Eukaryota</taxon>
        <taxon>Fungi</taxon>
        <taxon>Dikarya</taxon>
        <taxon>Ascomycota</taxon>
        <taxon>Saccharomycotina</taxon>
        <taxon>Saccharomycetes</taxon>
        <taxon>Saccharomycetales</taxon>
        <taxon>Saccharomycetaceae</taxon>
        <taxon>Saccharomyces</taxon>
    </lineage>
</organism>
<gene>
    <name type="primary">BRE5</name>
    <name type="ordered locus">YNR051C</name>
    <name type="ORF">N3465</name>
</gene>
<accession>P53741</accession>
<accession>D6W1M6</accession>
<reference key="1">
    <citation type="journal article" date="1997" name="Nature">
        <title>The nucleotide sequence of Saccharomyces cerevisiae chromosome XIV and its evolutionary implications.</title>
        <authorList>
            <person name="Philippsen P."/>
            <person name="Kleine K."/>
            <person name="Poehlmann R."/>
            <person name="Duesterhoeft A."/>
            <person name="Hamberg K."/>
            <person name="Hegemann J.H."/>
            <person name="Obermaier B."/>
            <person name="Urrestarazu L.A."/>
            <person name="Aert R."/>
            <person name="Albermann K."/>
            <person name="Altmann R."/>
            <person name="Andre B."/>
            <person name="Baladron V."/>
            <person name="Ballesta J.P.G."/>
            <person name="Becam A.-M."/>
            <person name="Beinhauer J.D."/>
            <person name="Boskovic J."/>
            <person name="Buitrago M.J."/>
            <person name="Bussereau F."/>
            <person name="Coster F."/>
            <person name="Crouzet M."/>
            <person name="D'Angelo M."/>
            <person name="Dal Pero F."/>
            <person name="De Antoni A."/>
            <person name="del Rey F."/>
            <person name="Doignon F."/>
            <person name="Domdey H."/>
            <person name="Dubois E."/>
            <person name="Fiedler T.A."/>
            <person name="Fleig U."/>
            <person name="Floeth M."/>
            <person name="Fritz C."/>
            <person name="Gaillardin C."/>
            <person name="Garcia-Cantalejo J.M."/>
            <person name="Glansdorff N."/>
            <person name="Goffeau A."/>
            <person name="Gueldener U."/>
            <person name="Herbert C.J."/>
            <person name="Heumann K."/>
            <person name="Heuss-Neitzel D."/>
            <person name="Hilbert H."/>
            <person name="Hinni K."/>
            <person name="Iraqui Houssaini I."/>
            <person name="Jacquet M."/>
            <person name="Jimenez A."/>
            <person name="Jonniaux J.-L."/>
            <person name="Karpfinger-Hartl L."/>
            <person name="Lanfranchi G."/>
            <person name="Lepingle A."/>
            <person name="Levesque H."/>
            <person name="Lyck R."/>
            <person name="Maftahi M."/>
            <person name="Mallet L."/>
            <person name="Maurer C.T.C."/>
            <person name="Messenguy F."/>
            <person name="Mewes H.-W."/>
            <person name="Moestl D."/>
            <person name="Nasr F."/>
            <person name="Nicaud J.-M."/>
            <person name="Niedenthal R.K."/>
            <person name="Pandolfo D."/>
            <person name="Pierard A."/>
            <person name="Piravandi E."/>
            <person name="Planta R.J."/>
            <person name="Pohl T.M."/>
            <person name="Purnelle B."/>
            <person name="Rebischung C."/>
            <person name="Remacha M.A."/>
            <person name="Revuelta J.L."/>
            <person name="Rinke M."/>
            <person name="Saiz J.E."/>
            <person name="Sartorello F."/>
            <person name="Scherens B."/>
            <person name="Sen-Gupta M."/>
            <person name="Soler-Mira A."/>
            <person name="Urbanus J.H.M."/>
            <person name="Valle G."/>
            <person name="Van Dyck L."/>
            <person name="Verhasselt P."/>
            <person name="Vierendeels F."/>
            <person name="Vissers S."/>
            <person name="Voet M."/>
            <person name="Volckaert G."/>
            <person name="Wach A."/>
            <person name="Wambutt R."/>
            <person name="Wedler H."/>
            <person name="Zollner A."/>
            <person name="Hani J."/>
        </authorList>
    </citation>
    <scope>NUCLEOTIDE SEQUENCE [LARGE SCALE GENOMIC DNA]</scope>
    <source>
        <strain>ATCC 204508 / S288c</strain>
    </source>
</reference>
<reference key="2">
    <citation type="journal article" date="2014" name="G3 (Bethesda)">
        <title>The reference genome sequence of Saccharomyces cerevisiae: Then and now.</title>
        <authorList>
            <person name="Engel S.R."/>
            <person name="Dietrich F.S."/>
            <person name="Fisk D.G."/>
            <person name="Binkley G."/>
            <person name="Balakrishnan R."/>
            <person name="Costanzo M.C."/>
            <person name="Dwight S.S."/>
            <person name="Hitz B.C."/>
            <person name="Karra K."/>
            <person name="Nash R.S."/>
            <person name="Weng S."/>
            <person name="Wong E.D."/>
            <person name="Lloyd P."/>
            <person name="Skrzypek M.S."/>
            <person name="Miyasato S.R."/>
            <person name="Simison M."/>
            <person name="Cherry J.M."/>
        </authorList>
    </citation>
    <scope>GENOME REANNOTATION</scope>
    <source>
        <strain>ATCC 204508 / S288c</strain>
    </source>
</reference>
<reference key="3">
    <citation type="journal article" date="2007" name="Genome Res.">
        <title>Approaching a complete repository of sequence-verified protein-encoding clones for Saccharomyces cerevisiae.</title>
        <authorList>
            <person name="Hu Y."/>
            <person name="Rolfs A."/>
            <person name="Bhullar B."/>
            <person name="Murthy T.V.S."/>
            <person name="Zhu C."/>
            <person name="Berger M.F."/>
            <person name="Camargo A.A."/>
            <person name="Kelley F."/>
            <person name="McCarron S."/>
            <person name="Jepson D."/>
            <person name="Richardson A."/>
            <person name="Raphael J."/>
            <person name="Moreira D."/>
            <person name="Taycher E."/>
            <person name="Zuo D."/>
            <person name="Mohr S."/>
            <person name="Kane M.F."/>
            <person name="Williamson J."/>
            <person name="Simpson A.J.G."/>
            <person name="Bulyk M.L."/>
            <person name="Harlow E."/>
            <person name="Marsischky G."/>
            <person name="Kolodner R.D."/>
            <person name="LaBaer J."/>
        </authorList>
    </citation>
    <scope>NUCLEOTIDE SEQUENCE [GENOMIC DNA]</scope>
    <source>
        <strain>ATCC 204508 / S288c</strain>
    </source>
</reference>
<reference key="4">
    <citation type="submission" date="1992-03" db="EMBL/GenBank/DDBJ databases">
        <authorList>
            <person name="Cusick M.E."/>
        </authorList>
    </citation>
    <scope>NUCLEOTIDE SEQUENCE [GENOMIC DNA] OF 1-441</scope>
</reference>
<reference key="5">
    <citation type="journal article" date="2003" name="Nat. Cell Biol.">
        <title>Ubp3 requires a cofactor, Bre5, to specifically de-ubiquitinate the COPII protein, Sec23.</title>
        <authorList>
            <person name="Cohen M."/>
            <person name="Stutz F."/>
            <person name="Belgareh N."/>
            <person name="Haguenauer-Tsapis R."/>
            <person name="Dargemont C."/>
        </authorList>
    </citation>
    <scope>FUNCTION</scope>
    <scope>SUBUNIT</scope>
</reference>
<reference key="6">
    <citation type="journal article" date="2003" name="Nature">
        <title>Global analysis of protein expression in yeast.</title>
        <authorList>
            <person name="Ghaemmaghami S."/>
            <person name="Huh W.-K."/>
            <person name="Bower K."/>
            <person name="Howson R.W."/>
            <person name="Belle A."/>
            <person name="Dephoure N."/>
            <person name="O'Shea E.K."/>
            <person name="Weissman J.S."/>
        </authorList>
    </citation>
    <scope>LEVEL OF PROTEIN EXPRESSION [LARGE SCALE ANALYSIS]</scope>
</reference>
<reference key="7">
    <citation type="journal article" date="2007" name="J. Proteome Res.">
        <title>Large-scale phosphorylation analysis of alpha-factor-arrested Saccharomyces cerevisiae.</title>
        <authorList>
            <person name="Li X."/>
            <person name="Gerber S.A."/>
            <person name="Rudner A.D."/>
            <person name="Beausoleil S.A."/>
            <person name="Haas W."/>
            <person name="Villen J."/>
            <person name="Elias J.E."/>
            <person name="Gygi S.P."/>
        </authorList>
    </citation>
    <scope>PHOSPHORYLATION [LARGE SCALE ANALYSIS] AT THR-336</scope>
    <scope>IDENTIFICATION BY MASS SPECTROMETRY [LARGE SCALE ANALYSIS]</scope>
    <source>
        <strain>ADR376</strain>
    </source>
</reference>
<reference key="8">
    <citation type="journal article" date="2007" name="Proc. Natl. Acad. Sci. U.S.A.">
        <title>Analysis of phosphorylation sites on proteins from Saccharomyces cerevisiae by electron transfer dissociation (ETD) mass spectrometry.</title>
        <authorList>
            <person name="Chi A."/>
            <person name="Huttenhower C."/>
            <person name="Geer L.Y."/>
            <person name="Coon J.J."/>
            <person name="Syka J.E.P."/>
            <person name="Bai D.L."/>
            <person name="Shabanowitz J."/>
            <person name="Burke D.J."/>
            <person name="Troyanskaya O.G."/>
            <person name="Hunt D.F."/>
        </authorList>
    </citation>
    <scope>PHOSPHORYLATION [LARGE SCALE ANALYSIS] AT SER-187 AND SER-398</scope>
    <scope>IDENTIFICATION BY MASS SPECTROMETRY [LARGE SCALE ANALYSIS]</scope>
</reference>
<reference key="9">
    <citation type="journal article" date="2008" name="Mol. Cell. Proteomics">
        <title>A multidimensional chromatography technology for in-depth phosphoproteome analysis.</title>
        <authorList>
            <person name="Albuquerque C.P."/>
            <person name="Smolka M.B."/>
            <person name="Payne S.H."/>
            <person name="Bafna V."/>
            <person name="Eng J."/>
            <person name="Zhou H."/>
        </authorList>
    </citation>
    <scope>PHOSPHORYLATION [LARGE SCALE ANALYSIS] AT SER-282</scope>
    <scope>IDENTIFICATION BY MASS SPECTROMETRY [LARGE SCALE ANALYSIS]</scope>
</reference>
<reference key="10">
    <citation type="journal article" date="2009" name="Science">
        <title>Global analysis of Cdk1 substrate phosphorylation sites provides insights into evolution.</title>
        <authorList>
            <person name="Holt L.J."/>
            <person name="Tuch B.B."/>
            <person name="Villen J."/>
            <person name="Johnson A.D."/>
            <person name="Gygi S.P."/>
            <person name="Morgan D.O."/>
        </authorList>
    </citation>
    <scope>PHOSPHORYLATION [LARGE SCALE ANALYSIS] AT SER-282 AND SER-340</scope>
    <scope>IDENTIFICATION BY MASS SPECTROMETRY [LARGE SCALE ANALYSIS]</scope>
</reference>
<reference key="11">
    <citation type="journal article" date="2010" name="EMBO Rep.">
        <title>Cdc48 and Ufd3, new partners of the ubiquitin protease Ubp3, are required for ribophagy.</title>
        <authorList>
            <person name="Ossareh-Nazari B."/>
            <person name="Bonizec M."/>
            <person name="Cohen M."/>
            <person name="Dokudovskaya S."/>
            <person name="Delalande F."/>
            <person name="Schaeffer C."/>
            <person name="Van Dorsselaer A."/>
            <person name="Dargemont C."/>
        </authorList>
    </citation>
    <scope>IDENTIFICATION IN A COMPLEX WITH DOA1; UBP3 AND CDC48</scope>
    <scope>INTERACTION WITH CDC48</scope>
    <scope>MUTAGENESIS OF 2-GLY--LYS-146 AND 147-PRO--ASP-515</scope>
</reference>
<reference key="12">
    <citation type="journal article" date="2007" name="J. Mol. Biol.">
        <title>Molecular basis for bre5 cofactor recognition by the ubp3 deubiquitylating enzyme.</title>
        <authorList>
            <person name="Li K."/>
            <person name="Ossareh-Nazari B."/>
            <person name="Liu X."/>
            <person name="Dargemont C."/>
            <person name="Marmorstein R."/>
        </authorList>
    </citation>
    <scope>X-RAY CRYSTALLOGRAPHY (1.69 ANGSTROMS) OF 1-146 IN COMPLEX WITH UBP3</scope>
</reference>
<keyword id="KW-0002">3D-structure</keyword>
<keyword id="KW-0597">Phosphoprotein</keyword>
<keyword id="KW-1185">Reference proteome</keyword>
<keyword id="KW-0694">RNA-binding</keyword>
<keyword id="KW-0833">Ubl conjugation pathway</keyword>
<sequence>MGVTVQDICFAFLQNYYERMRTDPSKLAYFYASTAELTHTNYQSKSTNEKDDVLPTVKVTGRENINKFFSRNDAKVRSLKLKLDTIDFQYTGHLHKSILIMATGEMFWTGTPVYKFCQTFILLPSSNGSTFDITNDIIRFISNSFKPYVLTDASLSQSNEENSVSAVEEDKIRHESGVEKEKEKEKSPEISKPKAKKETVKDTTAPTESSTQEKPIVDHSQPRAIPVTKESKIHTETVPSSTKGNHKQDEVSTEELGNVTKLNEKSHKAEKKAAPIKTKEGSVEAINAVNNSSLPNGKEVSDEKPVPGGVKEAETEIKPIEPQVSDAKESGNNASTPSSSPEPVANPPKMTWASKLMNENSDRISKNNTTVEYIRPETLPKKPTERKFEMGNRRDNASANSKNKKKPVFSTVNKDGFYPIYIRGTNGLREEKLRSALEKEFGKVMRITAADNFAVVDFETQKSQIDALEKKKKSIDGIEVCLERKTVKKPTSNNPPGIFTNGTRSHRKQPLKRKD</sequence>